<gene>
    <name evidence="1" type="primary">priB</name>
    <name type="ordered locus">VC_0367</name>
</gene>
<comment type="function">
    <text evidence="1">Involved in the restart of stalled replication forks, which reloads the replicative helicase on sites other than the origin of replication; the PriA-PriB pathway is the major replication restart pathway. During primosome assembly it facilitates complex formation between PriA and DnaT on DNA; stabilizes PriA on DNA. Stimulates the DNA unwinding activity of PriA helicase.</text>
</comment>
<comment type="subunit">
    <text evidence="1">Homodimer. Interacts with PriA and DnaT. Component of the replication restart primosome. Primosome assembly occurs via a 'hand-off' mechanism. PriA binds to replication forks, subsequently PriB then DnaT bind; DnaT then displaces ssDNA to generate the helicase loading substrate.</text>
</comment>
<comment type="similarity">
    <text evidence="1">Belongs to the PriB family.</text>
</comment>
<reference key="1">
    <citation type="journal article" date="2000" name="Nature">
        <title>DNA sequence of both chromosomes of the cholera pathogen Vibrio cholerae.</title>
        <authorList>
            <person name="Heidelberg J.F."/>
            <person name="Eisen J.A."/>
            <person name="Nelson W.C."/>
            <person name="Clayton R.A."/>
            <person name="Gwinn M.L."/>
            <person name="Dodson R.J."/>
            <person name="Haft D.H."/>
            <person name="Hickey E.K."/>
            <person name="Peterson J.D."/>
            <person name="Umayam L.A."/>
            <person name="Gill S.R."/>
            <person name="Nelson K.E."/>
            <person name="Read T.D."/>
            <person name="Tettelin H."/>
            <person name="Richardson D.L."/>
            <person name="Ermolaeva M.D."/>
            <person name="Vamathevan J.J."/>
            <person name="Bass S."/>
            <person name="Qin H."/>
            <person name="Dragoi I."/>
            <person name="Sellers P."/>
            <person name="McDonald L.A."/>
            <person name="Utterback T.R."/>
            <person name="Fleischmann R.D."/>
            <person name="Nierman W.C."/>
            <person name="White O."/>
            <person name="Salzberg S.L."/>
            <person name="Smith H.O."/>
            <person name="Colwell R.R."/>
            <person name="Mekalanos J.J."/>
            <person name="Venter J.C."/>
            <person name="Fraser C.M."/>
        </authorList>
    </citation>
    <scope>NUCLEOTIDE SEQUENCE [LARGE SCALE GENOMIC DNA]</scope>
    <source>
        <strain>ATCC 39315 / El Tor Inaba N16961</strain>
    </source>
</reference>
<accession>Q9KUZ1</accession>
<evidence type="ECO:0000255" key="1">
    <source>
        <dbReference type="HAMAP-Rule" id="MF_00720"/>
    </source>
</evidence>
<name>PRIB_VIBCH</name>
<keyword id="KW-0235">DNA replication</keyword>
<keyword id="KW-0238">DNA-binding</keyword>
<keyword id="KW-0639">Primosome</keyword>
<keyword id="KW-1185">Reference proteome</keyword>
<feature type="chain" id="PRO_0000199064" description="Replication restart protein PriB">
    <location>
        <begin position="1"/>
        <end position="100"/>
    </location>
</feature>
<feature type="domain" description="SSB" evidence="1">
    <location>
        <begin position="1"/>
        <end position="100"/>
    </location>
</feature>
<organism>
    <name type="scientific">Vibrio cholerae serotype O1 (strain ATCC 39315 / El Tor Inaba N16961)</name>
    <dbReference type="NCBI Taxonomy" id="243277"/>
    <lineage>
        <taxon>Bacteria</taxon>
        <taxon>Pseudomonadati</taxon>
        <taxon>Pseudomonadota</taxon>
        <taxon>Gammaproteobacteria</taxon>
        <taxon>Vibrionales</taxon>
        <taxon>Vibrionaceae</taxon>
        <taxon>Vibrio</taxon>
    </lineage>
</organism>
<protein>
    <recommendedName>
        <fullName evidence="1">Replication restart protein PriB</fullName>
    </recommendedName>
</protein>
<dbReference type="EMBL" id="AE003852">
    <property type="protein sequence ID" value="AAF93540.1"/>
    <property type="molecule type" value="Genomic_DNA"/>
</dbReference>
<dbReference type="PIR" id="A82333">
    <property type="entry name" value="A82333"/>
</dbReference>
<dbReference type="RefSeq" id="NP_230021.1">
    <property type="nucleotide sequence ID" value="NC_002505.1"/>
</dbReference>
<dbReference type="RefSeq" id="WP_000184782.1">
    <property type="nucleotide sequence ID" value="NZ_LT906614.1"/>
</dbReference>
<dbReference type="SMR" id="Q9KUZ1"/>
<dbReference type="STRING" id="243277.VC_0367"/>
<dbReference type="DNASU" id="2615046"/>
<dbReference type="EnsemblBacteria" id="AAF93540">
    <property type="protein sequence ID" value="AAF93540"/>
    <property type="gene ID" value="VC_0367"/>
</dbReference>
<dbReference type="GeneID" id="88783678"/>
<dbReference type="KEGG" id="vch:VC_0367"/>
<dbReference type="PATRIC" id="fig|243277.26.peg.343"/>
<dbReference type="eggNOG" id="COG2965">
    <property type="taxonomic scope" value="Bacteria"/>
</dbReference>
<dbReference type="HOGENOM" id="CLU_166075_0_0_6"/>
<dbReference type="Proteomes" id="UP000000584">
    <property type="component" value="Chromosome 1"/>
</dbReference>
<dbReference type="GO" id="GO:0009295">
    <property type="term" value="C:nucleoid"/>
    <property type="evidence" value="ECO:0000318"/>
    <property type="project" value="GO_Central"/>
</dbReference>
<dbReference type="GO" id="GO:1990077">
    <property type="term" value="C:primosome complex"/>
    <property type="evidence" value="ECO:0007669"/>
    <property type="project" value="UniProtKB-KW"/>
</dbReference>
<dbReference type="GO" id="GO:0008047">
    <property type="term" value="F:enzyme activator activity"/>
    <property type="evidence" value="ECO:0000318"/>
    <property type="project" value="GO_Central"/>
</dbReference>
<dbReference type="GO" id="GO:0003697">
    <property type="term" value="F:single-stranded DNA binding"/>
    <property type="evidence" value="ECO:0000318"/>
    <property type="project" value="GO_Central"/>
</dbReference>
<dbReference type="GO" id="GO:0006260">
    <property type="term" value="P:DNA replication"/>
    <property type="evidence" value="ECO:0000318"/>
    <property type="project" value="GO_Central"/>
</dbReference>
<dbReference type="GO" id="GO:0006269">
    <property type="term" value="P:DNA replication, synthesis of primer"/>
    <property type="evidence" value="ECO:0007669"/>
    <property type="project" value="UniProtKB-KW"/>
</dbReference>
<dbReference type="Gene3D" id="2.40.50.140">
    <property type="entry name" value="Nucleic acid-binding proteins"/>
    <property type="match status" value="1"/>
</dbReference>
<dbReference type="HAMAP" id="MF_00720">
    <property type="entry name" value="PriB"/>
    <property type="match status" value="1"/>
</dbReference>
<dbReference type="InterPro" id="IPR012340">
    <property type="entry name" value="NA-bd_OB-fold"/>
</dbReference>
<dbReference type="InterPro" id="IPR000424">
    <property type="entry name" value="Primosome_PriB/ssb"/>
</dbReference>
<dbReference type="InterPro" id="IPR023646">
    <property type="entry name" value="Prisomal_replication_PriB"/>
</dbReference>
<dbReference type="NCBIfam" id="TIGR04418">
    <property type="entry name" value="PriB_gamma"/>
    <property type="match status" value="1"/>
</dbReference>
<dbReference type="Pfam" id="PF22657">
    <property type="entry name" value="SSB_1"/>
    <property type="match status" value="1"/>
</dbReference>
<dbReference type="PIRSF" id="PIRSF003135">
    <property type="entry name" value="Primosomal_n"/>
    <property type="match status" value="1"/>
</dbReference>
<dbReference type="SUPFAM" id="SSF50249">
    <property type="entry name" value="Nucleic acid-binding proteins"/>
    <property type="match status" value="1"/>
</dbReference>
<dbReference type="PROSITE" id="PS50935">
    <property type="entry name" value="SSB"/>
    <property type="match status" value="1"/>
</dbReference>
<sequence length="100" mass="10914">MTNRIELSGVVAKALVRSQSPSGVKHCHFWLEHRSTMVEADLPRQVFCRLPVVVSGARSEALTQNLVQGSSILVSGFLAYQTSRNGVGKLVLHADKISQI</sequence>
<proteinExistence type="inferred from homology"/>